<reference key="1">
    <citation type="journal article" date="2006" name="Proc. Natl. Acad. Sci. U.S.A.">
        <title>Molecular genetic anatomy of inter- and intraserotype variation in the human bacterial pathogen group A Streptococcus.</title>
        <authorList>
            <person name="Beres S.B."/>
            <person name="Richter E.W."/>
            <person name="Nagiec M.J."/>
            <person name="Sumby P."/>
            <person name="Porcella S.F."/>
            <person name="DeLeo F.R."/>
            <person name="Musser J.M."/>
        </authorList>
    </citation>
    <scope>NUCLEOTIDE SEQUENCE [LARGE SCALE GENOMIC DNA]</scope>
    <source>
        <strain>MGAS2096</strain>
    </source>
</reference>
<name>RF1_STRPB</name>
<accession>Q1JBR9</accession>
<feature type="chain" id="PRO_0000263364" description="Peptide chain release factor 1">
    <location>
        <begin position="1"/>
        <end position="359"/>
    </location>
</feature>
<feature type="modified residue" description="N5-methylglutamine" evidence="1">
    <location>
        <position position="236"/>
    </location>
</feature>
<gene>
    <name evidence="1" type="primary">prfA</name>
    <name type="ordered locus">MGAS2096_Spy0937</name>
</gene>
<keyword id="KW-0963">Cytoplasm</keyword>
<keyword id="KW-0488">Methylation</keyword>
<keyword id="KW-0648">Protein biosynthesis</keyword>
<sequence>MNIYDQLQAVEDRYEELGELLSDPDVVSDTKRFMELSREEANTRETVTAYREYKQVIQTISDAEEMIKDASGDPELEEMAKEELKESKAAKEEYEEKLKILLLPKDPNDDKNIILEIRGAAGGDEAALFAGDLLTMYQKYAETQGWRFEVMESSVNGVGGIKEVVAMVSGQSVYSKLKYESGAHRVQRVPVTESQGRVHTSTATVLVMPEVEEVEYDIDQKDLRVDIYHASGAGGQNVNKVATAVRMVHIPTGIKVEMQEERTQQKNRDKAMKIIRARVADHFAQIAQDEQDAERKSTVGTGDRSERIRTYNFPQNRVTDHRIGLTLQKLDTILSGKMDEVIDALVMYDQTKKLESLNN</sequence>
<evidence type="ECO:0000255" key="1">
    <source>
        <dbReference type="HAMAP-Rule" id="MF_00093"/>
    </source>
</evidence>
<comment type="function">
    <text evidence="1">Peptide chain release factor 1 directs the termination of translation in response to the peptide chain termination codons UAG and UAA.</text>
</comment>
<comment type="subcellular location">
    <subcellularLocation>
        <location evidence="1">Cytoplasm</location>
    </subcellularLocation>
</comment>
<comment type="PTM">
    <text evidence="1">Methylated by PrmC. Methylation increases the termination efficiency of RF1.</text>
</comment>
<comment type="similarity">
    <text evidence="1">Belongs to the prokaryotic/mitochondrial release factor family.</text>
</comment>
<organism>
    <name type="scientific">Streptococcus pyogenes serotype M12 (strain MGAS2096)</name>
    <dbReference type="NCBI Taxonomy" id="370553"/>
    <lineage>
        <taxon>Bacteria</taxon>
        <taxon>Bacillati</taxon>
        <taxon>Bacillota</taxon>
        <taxon>Bacilli</taxon>
        <taxon>Lactobacillales</taxon>
        <taxon>Streptococcaceae</taxon>
        <taxon>Streptococcus</taxon>
    </lineage>
</organism>
<proteinExistence type="inferred from homology"/>
<dbReference type="EMBL" id="CP000261">
    <property type="protein sequence ID" value="ABF35989.1"/>
    <property type="molecule type" value="Genomic_DNA"/>
</dbReference>
<dbReference type="SMR" id="Q1JBR9"/>
<dbReference type="KEGG" id="spj:MGAS2096_Spy0937"/>
<dbReference type="HOGENOM" id="CLU_036856_0_1_9"/>
<dbReference type="GO" id="GO:0005737">
    <property type="term" value="C:cytoplasm"/>
    <property type="evidence" value="ECO:0007669"/>
    <property type="project" value="UniProtKB-SubCell"/>
</dbReference>
<dbReference type="GO" id="GO:0016149">
    <property type="term" value="F:translation release factor activity, codon specific"/>
    <property type="evidence" value="ECO:0007669"/>
    <property type="project" value="UniProtKB-UniRule"/>
</dbReference>
<dbReference type="FunFam" id="3.30.160.20:FF:000027">
    <property type="entry name" value="Peptide chain release factor 1"/>
    <property type="match status" value="1"/>
</dbReference>
<dbReference type="FunFam" id="3.30.70.1660:FF:000002">
    <property type="entry name" value="Peptide chain release factor 1"/>
    <property type="match status" value="1"/>
</dbReference>
<dbReference type="FunFam" id="3.30.70.1660:FF:000004">
    <property type="entry name" value="Peptide chain release factor 1"/>
    <property type="match status" value="1"/>
</dbReference>
<dbReference type="Gene3D" id="3.30.160.20">
    <property type="match status" value="1"/>
</dbReference>
<dbReference type="Gene3D" id="3.30.70.1660">
    <property type="match status" value="2"/>
</dbReference>
<dbReference type="Gene3D" id="6.10.140.1950">
    <property type="match status" value="1"/>
</dbReference>
<dbReference type="HAMAP" id="MF_00093">
    <property type="entry name" value="Rel_fac_1"/>
    <property type="match status" value="1"/>
</dbReference>
<dbReference type="InterPro" id="IPR005139">
    <property type="entry name" value="PCRF"/>
</dbReference>
<dbReference type="InterPro" id="IPR000352">
    <property type="entry name" value="Pep_chain_release_fac_I"/>
</dbReference>
<dbReference type="InterPro" id="IPR045853">
    <property type="entry name" value="Pep_chain_release_fac_I_sf"/>
</dbReference>
<dbReference type="InterPro" id="IPR050057">
    <property type="entry name" value="Prokaryotic/Mito_RF"/>
</dbReference>
<dbReference type="InterPro" id="IPR004373">
    <property type="entry name" value="RF-1"/>
</dbReference>
<dbReference type="NCBIfam" id="TIGR00019">
    <property type="entry name" value="prfA"/>
    <property type="match status" value="1"/>
</dbReference>
<dbReference type="NCBIfam" id="NF001859">
    <property type="entry name" value="PRK00591.1"/>
    <property type="match status" value="1"/>
</dbReference>
<dbReference type="PANTHER" id="PTHR43804">
    <property type="entry name" value="LD18447P"/>
    <property type="match status" value="1"/>
</dbReference>
<dbReference type="PANTHER" id="PTHR43804:SF7">
    <property type="entry name" value="LD18447P"/>
    <property type="match status" value="1"/>
</dbReference>
<dbReference type="Pfam" id="PF03462">
    <property type="entry name" value="PCRF"/>
    <property type="match status" value="1"/>
</dbReference>
<dbReference type="Pfam" id="PF00472">
    <property type="entry name" value="RF-1"/>
    <property type="match status" value="1"/>
</dbReference>
<dbReference type="SMART" id="SM00937">
    <property type="entry name" value="PCRF"/>
    <property type="match status" value="1"/>
</dbReference>
<dbReference type="SUPFAM" id="SSF75620">
    <property type="entry name" value="Release factor"/>
    <property type="match status" value="1"/>
</dbReference>
<dbReference type="PROSITE" id="PS00745">
    <property type="entry name" value="RF_PROK_I"/>
    <property type="match status" value="1"/>
</dbReference>
<protein>
    <recommendedName>
        <fullName evidence="1">Peptide chain release factor 1</fullName>
        <shortName evidence="1">RF-1</shortName>
    </recommendedName>
</protein>